<organism>
    <name type="scientific">Bos taurus</name>
    <name type="common">Bovine</name>
    <dbReference type="NCBI Taxonomy" id="9913"/>
    <lineage>
        <taxon>Eukaryota</taxon>
        <taxon>Metazoa</taxon>
        <taxon>Chordata</taxon>
        <taxon>Craniata</taxon>
        <taxon>Vertebrata</taxon>
        <taxon>Euteleostomi</taxon>
        <taxon>Mammalia</taxon>
        <taxon>Eutheria</taxon>
        <taxon>Laurasiatheria</taxon>
        <taxon>Artiodactyla</taxon>
        <taxon>Ruminantia</taxon>
        <taxon>Pecora</taxon>
        <taxon>Bovidae</taxon>
        <taxon>Bovinae</taxon>
        <taxon>Bos</taxon>
    </lineage>
</organism>
<gene>
    <name type="primary">RIOK3</name>
</gene>
<name>RIOK3_BOVIN</name>
<evidence type="ECO:0000250" key="1"/>
<evidence type="ECO:0000250" key="2">
    <source>
        <dbReference type="UniProtKB" id="O14730"/>
    </source>
</evidence>
<evidence type="ECO:0000250" key="3">
    <source>
        <dbReference type="UniProtKB" id="Q9DBU3"/>
    </source>
</evidence>
<evidence type="ECO:0000256" key="4">
    <source>
        <dbReference type="SAM" id="MobiDB-lite"/>
    </source>
</evidence>
<evidence type="ECO:0000305" key="5"/>
<sequence>MDLVRVASPEPGPAAAWGPNKCPWATPQNTISCSLSDVMSEQLAKELQLEEEAAAFPEVTVAEGPFITGENIDTSSDLMLAQMLQMEFDREYDAQLRREEKKFNGDSKVCISFENYRKVHPYEDSDSSEDEVDWQDTRDDPYRPAKPIPTPKKGFIGKGKDITTKHDEVVCGRKNTARMENFAPGFQVGDGIGMDLKLSNHVFNALKQHAYSEERRSARLHEKKEHSTAEKAVDPKTRLLMYKMVNSGMLETITGCISTGKESVVFHAYGGSMEDGKEDSKVIPTECAIKVFKTTLNEFKNRDKYIKDDFRFKDRFSKLNPRKIIRMWAEKEMHNLTRMQRAGIPCPTVVLLKKHILVMSFIGHDQVPAPKLKEVKLSSEEMKDAYYQTLHLMQQLYDECTLVHADLSEYNMLWHAGKVWLIDVSQSVEPTHPHGLEFLFRDCRNVSQFFQKGGVKEALGERELFNAVSGLNISADNEADFLAEIEALEKMNEDHVQKNGRKAASFLKDDGGPPILYDE</sequence>
<protein>
    <recommendedName>
        <fullName>Serine/threonine-protein kinase RIO3</fullName>
        <ecNumber>2.7.11.1</ecNumber>
    </recommendedName>
    <alternativeName>
        <fullName>RIO kinase 3</fullName>
    </alternativeName>
</protein>
<keyword id="KW-0051">Antiviral defense</keyword>
<keyword id="KW-0067">ATP-binding</keyword>
<keyword id="KW-0963">Cytoplasm</keyword>
<keyword id="KW-0391">Immunity</keyword>
<keyword id="KW-0399">Innate immunity</keyword>
<keyword id="KW-0418">Kinase</keyword>
<keyword id="KW-0460">Magnesium</keyword>
<keyword id="KW-0479">Metal-binding</keyword>
<keyword id="KW-0547">Nucleotide-binding</keyword>
<keyword id="KW-0597">Phosphoprotein</keyword>
<keyword id="KW-1185">Reference proteome</keyword>
<keyword id="KW-0690">Ribosome biogenesis</keyword>
<keyword id="KW-0723">Serine/threonine-protein kinase</keyword>
<keyword id="KW-0808">Transferase</keyword>
<feature type="chain" id="PRO_0000247807" description="Serine/threonine-protein kinase RIO3">
    <location>
        <begin position="1"/>
        <end position="519"/>
    </location>
</feature>
<feature type="domain" description="Protein kinase">
    <location>
        <begin position="251"/>
        <end position="519"/>
    </location>
</feature>
<feature type="region of interest" description="Disordered" evidence="4">
    <location>
        <begin position="122"/>
        <end position="159"/>
    </location>
</feature>
<feature type="compositionally biased region" description="Acidic residues" evidence="4">
    <location>
        <begin position="124"/>
        <end position="134"/>
    </location>
</feature>
<feature type="active site" description="Proton acceptor" evidence="1">
    <location>
        <position position="406"/>
    </location>
</feature>
<feature type="binding site" evidence="1">
    <location>
        <begin position="257"/>
        <end position="265"/>
    </location>
    <ligand>
        <name>ATP</name>
        <dbReference type="ChEBI" id="CHEBI:30616"/>
    </ligand>
</feature>
<feature type="binding site" evidence="1">
    <location>
        <position position="290"/>
    </location>
    <ligand>
        <name>ATP</name>
        <dbReference type="ChEBI" id="CHEBI:30616"/>
    </ligand>
</feature>
<feature type="modified residue" description="Phosphoserine" evidence="2">
    <location>
        <position position="8"/>
    </location>
</feature>
<feature type="modified residue" description="Phosphoserine" evidence="2">
    <location>
        <position position="112"/>
    </location>
</feature>
<feature type="modified residue" description="Phosphotyrosine" evidence="2">
    <location>
        <position position="122"/>
    </location>
</feature>
<feature type="modified residue" description="Phosphoserine" evidence="3">
    <location>
        <position position="125"/>
    </location>
</feature>
<feature type="modified residue" description="Phosphoserine" evidence="2">
    <location>
        <position position="127"/>
    </location>
</feature>
<feature type="modified residue" description="Phosphoserine" evidence="2">
    <location>
        <position position="128"/>
    </location>
</feature>
<proteinExistence type="evidence at transcript level"/>
<accession>Q1RMT7</accession>
<dbReference type="EC" id="2.7.11.1"/>
<dbReference type="EMBL" id="BC114721">
    <property type="protein sequence ID" value="AAI14722.1"/>
    <property type="molecule type" value="mRNA"/>
</dbReference>
<dbReference type="RefSeq" id="NP_001069304.1">
    <property type="nucleotide sequence ID" value="NM_001075836.1"/>
</dbReference>
<dbReference type="SMR" id="Q1RMT7"/>
<dbReference type="FunCoup" id="Q1RMT7">
    <property type="interactions" value="1467"/>
</dbReference>
<dbReference type="STRING" id="9913.ENSBTAP00000013242"/>
<dbReference type="PaxDb" id="9913-ENSBTAP00000013242"/>
<dbReference type="Ensembl" id="ENSBTAT00000013242.4">
    <property type="protein sequence ID" value="ENSBTAP00000013242.3"/>
    <property type="gene ID" value="ENSBTAG00000010042.5"/>
</dbReference>
<dbReference type="GeneID" id="522917"/>
<dbReference type="KEGG" id="bta:522917"/>
<dbReference type="CTD" id="8780"/>
<dbReference type="VEuPathDB" id="HostDB:ENSBTAG00000010042"/>
<dbReference type="VGNC" id="VGNC:49977">
    <property type="gene designation" value="RIOK3"/>
</dbReference>
<dbReference type="eggNOG" id="KOG2269">
    <property type="taxonomic scope" value="Eukaryota"/>
</dbReference>
<dbReference type="GeneTree" id="ENSGT00940000157008"/>
<dbReference type="HOGENOM" id="CLU_018693_5_0_1"/>
<dbReference type="InParanoid" id="Q1RMT7"/>
<dbReference type="OMA" id="SKCPWGA"/>
<dbReference type="OrthoDB" id="205248at2759"/>
<dbReference type="TreeFam" id="TF105831"/>
<dbReference type="Reactome" id="R-BTA-6791226">
    <property type="pathway name" value="Major pathway of rRNA processing in the nucleolus and cytosol"/>
</dbReference>
<dbReference type="Proteomes" id="UP000009136">
    <property type="component" value="Chromosome 24"/>
</dbReference>
<dbReference type="Bgee" id="ENSBTAG00000010042">
    <property type="expression patterns" value="Expressed in oocyte and 106 other cell types or tissues"/>
</dbReference>
<dbReference type="GO" id="GO:0005829">
    <property type="term" value="C:cytosol"/>
    <property type="evidence" value="ECO:0000318"/>
    <property type="project" value="GO_Central"/>
</dbReference>
<dbReference type="GO" id="GO:0030688">
    <property type="term" value="C:preribosome, small subunit precursor"/>
    <property type="evidence" value="ECO:0000318"/>
    <property type="project" value="GO_Central"/>
</dbReference>
<dbReference type="GO" id="GO:0005524">
    <property type="term" value="F:ATP binding"/>
    <property type="evidence" value="ECO:0007669"/>
    <property type="project" value="UniProtKB-KW"/>
</dbReference>
<dbReference type="GO" id="GO:0046872">
    <property type="term" value="F:metal ion binding"/>
    <property type="evidence" value="ECO:0007669"/>
    <property type="project" value="UniProtKB-KW"/>
</dbReference>
<dbReference type="GO" id="GO:0106310">
    <property type="term" value="F:protein serine kinase activity"/>
    <property type="evidence" value="ECO:0007669"/>
    <property type="project" value="RHEA"/>
</dbReference>
<dbReference type="GO" id="GO:0004674">
    <property type="term" value="F:protein serine/threonine kinase activity"/>
    <property type="evidence" value="ECO:0000318"/>
    <property type="project" value="GO_Central"/>
</dbReference>
<dbReference type="GO" id="GO:0051607">
    <property type="term" value="P:defense response to virus"/>
    <property type="evidence" value="ECO:0007669"/>
    <property type="project" value="UniProtKB-KW"/>
</dbReference>
<dbReference type="GO" id="GO:0045087">
    <property type="term" value="P:innate immune response"/>
    <property type="evidence" value="ECO:0007669"/>
    <property type="project" value="UniProtKB-KW"/>
</dbReference>
<dbReference type="GO" id="GO:0030490">
    <property type="term" value="P:maturation of SSU-rRNA"/>
    <property type="evidence" value="ECO:0000318"/>
    <property type="project" value="GO_Central"/>
</dbReference>
<dbReference type="CDD" id="cd05146">
    <property type="entry name" value="RIO3_euk"/>
    <property type="match status" value="1"/>
</dbReference>
<dbReference type="FunFam" id="1.10.510.10:FF:000254">
    <property type="entry name" value="Serine/threonine-protein kinase RIO3"/>
    <property type="match status" value="1"/>
</dbReference>
<dbReference type="FunFam" id="3.30.200.20:FF:000200">
    <property type="entry name" value="Serine/threonine-protein kinase RIO3"/>
    <property type="match status" value="1"/>
</dbReference>
<dbReference type="Gene3D" id="3.30.200.20">
    <property type="entry name" value="Phosphorylase Kinase, domain 1"/>
    <property type="match status" value="1"/>
</dbReference>
<dbReference type="Gene3D" id="1.10.510.10">
    <property type="entry name" value="Transferase(Phosphotransferase) domain 1"/>
    <property type="match status" value="1"/>
</dbReference>
<dbReference type="InterPro" id="IPR011009">
    <property type="entry name" value="Kinase-like_dom_sf"/>
</dbReference>
<dbReference type="InterPro" id="IPR051272">
    <property type="entry name" value="RIO-type_Ser/Thr_kinase"/>
</dbReference>
<dbReference type="InterPro" id="IPR018934">
    <property type="entry name" value="RIO_dom"/>
</dbReference>
<dbReference type="InterPro" id="IPR000687">
    <property type="entry name" value="RIO_kinase"/>
</dbReference>
<dbReference type="InterPro" id="IPR018935">
    <property type="entry name" value="RIO_kinase_CS"/>
</dbReference>
<dbReference type="InterPro" id="IPR017406">
    <property type="entry name" value="Ser/Thr_kinase_Rio3"/>
</dbReference>
<dbReference type="PANTHER" id="PTHR45723">
    <property type="entry name" value="SERINE/THREONINE-PROTEIN KINASE RIO1"/>
    <property type="match status" value="1"/>
</dbReference>
<dbReference type="Pfam" id="PF01163">
    <property type="entry name" value="RIO1"/>
    <property type="match status" value="1"/>
</dbReference>
<dbReference type="PIRSF" id="PIRSF038146">
    <property type="entry name" value="Ser/Thr_PK_RIO3"/>
    <property type="match status" value="1"/>
</dbReference>
<dbReference type="SMART" id="SM00090">
    <property type="entry name" value="RIO"/>
    <property type="match status" value="1"/>
</dbReference>
<dbReference type="SUPFAM" id="SSF56112">
    <property type="entry name" value="Protein kinase-like (PK-like)"/>
    <property type="match status" value="1"/>
</dbReference>
<dbReference type="PROSITE" id="PS01245">
    <property type="entry name" value="RIO1"/>
    <property type="match status" value="1"/>
</dbReference>
<comment type="function">
    <text evidence="2">Involved in regulation of type I interferon (IFN)-dependent immune response which plays a critical role in the innate immune response against DNA and RNA viruses. May act as an adapter protein essential for the recruitment of TBK1 to IRF3. Phosphorylates IFIH1 within the C-terminal region interfering with IFIH1 filament assembly on long dsRNA and resulting in attenuated IFIH1-signaling. Can inhibit CASP10 isoform 7-mediated activation of the NF-kappaB signaling pathway. May play a role in the biogenesis of the 40S ribosomal subunit. Involved in the processing of 21S pre-rRNA to the mature 18S rRNA.</text>
</comment>
<comment type="catalytic activity">
    <reaction>
        <text>L-seryl-[protein] + ATP = O-phospho-L-seryl-[protein] + ADP + H(+)</text>
        <dbReference type="Rhea" id="RHEA:17989"/>
        <dbReference type="Rhea" id="RHEA-COMP:9863"/>
        <dbReference type="Rhea" id="RHEA-COMP:11604"/>
        <dbReference type="ChEBI" id="CHEBI:15378"/>
        <dbReference type="ChEBI" id="CHEBI:29999"/>
        <dbReference type="ChEBI" id="CHEBI:30616"/>
        <dbReference type="ChEBI" id="CHEBI:83421"/>
        <dbReference type="ChEBI" id="CHEBI:456216"/>
        <dbReference type="EC" id="2.7.11.1"/>
    </reaction>
</comment>
<comment type="catalytic activity">
    <reaction>
        <text>L-threonyl-[protein] + ATP = O-phospho-L-threonyl-[protein] + ADP + H(+)</text>
        <dbReference type="Rhea" id="RHEA:46608"/>
        <dbReference type="Rhea" id="RHEA-COMP:11060"/>
        <dbReference type="Rhea" id="RHEA-COMP:11605"/>
        <dbReference type="ChEBI" id="CHEBI:15378"/>
        <dbReference type="ChEBI" id="CHEBI:30013"/>
        <dbReference type="ChEBI" id="CHEBI:30616"/>
        <dbReference type="ChEBI" id="CHEBI:61977"/>
        <dbReference type="ChEBI" id="CHEBI:456216"/>
        <dbReference type="EC" id="2.7.11.1"/>
    </reaction>
</comment>
<comment type="cofactor">
    <cofactor evidence="5">
        <name>Mg(2+)</name>
        <dbReference type="ChEBI" id="CHEBI:18420"/>
    </cofactor>
</comment>
<comment type="subunit">
    <text evidence="2">Interacts with CASP10. Interacts with IRF3; RIOK3 probably mediates the interaction of TBK1 with IRF3. Associated with 40S pre-ribosomal particles.</text>
</comment>
<comment type="subcellular location">
    <subcellularLocation>
        <location evidence="2">Cytoplasm</location>
    </subcellularLocation>
</comment>
<comment type="PTM">
    <text evidence="2">Autophosphorylated (in vitro).</text>
</comment>
<comment type="similarity">
    <text evidence="5">Belongs to the protein kinase superfamily. RIO-type Ser/Thr kinase family.</text>
</comment>
<reference key="1">
    <citation type="submission" date="2006-04" db="EMBL/GenBank/DDBJ databases">
        <authorList>
            <consortium name="NIH - Mammalian Gene Collection (MGC) project"/>
        </authorList>
    </citation>
    <scope>NUCLEOTIDE SEQUENCE [LARGE SCALE MRNA]</scope>
    <source>
        <strain>Hereford</strain>
        <tissue>Uterus</tissue>
    </source>
</reference>